<comment type="function">
    <text evidence="1">Involved in iron-sulfur (Fe-S) cluster assembly. May act as a regulator of Fe-S biogenesis.</text>
</comment>
<comment type="similarity">
    <text evidence="1">Belongs to the frataxin family.</text>
</comment>
<dbReference type="EMBL" id="CP000270">
    <property type="protein sequence ID" value="ABE32580.1"/>
    <property type="molecule type" value="Genomic_DNA"/>
</dbReference>
<dbReference type="RefSeq" id="WP_011490036.1">
    <property type="nucleotide sequence ID" value="NZ_CP008760.1"/>
</dbReference>
<dbReference type="SMR" id="Q13TK9"/>
<dbReference type="STRING" id="266265.Bxe_A0353"/>
<dbReference type="KEGG" id="bxb:DR64_2523"/>
<dbReference type="KEGG" id="bxe:Bxe_A0353"/>
<dbReference type="PATRIC" id="fig|266265.5.peg.4272"/>
<dbReference type="eggNOG" id="COG1965">
    <property type="taxonomic scope" value="Bacteria"/>
</dbReference>
<dbReference type="OrthoDB" id="285675at2"/>
<dbReference type="Proteomes" id="UP000001817">
    <property type="component" value="Chromosome 1"/>
</dbReference>
<dbReference type="GO" id="GO:0005829">
    <property type="term" value="C:cytosol"/>
    <property type="evidence" value="ECO:0007669"/>
    <property type="project" value="TreeGrafter"/>
</dbReference>
<dbReference type="GO" id="GO:0008199">
    <property type="term" value="F:ferric iron binding"/>
    <property type="evidence" value="ECO:0007669"/>
    <property type="project" value="InterPro"/>
</dbReference>
<dbReference type="GO" id="GO:0008198">
    <property type="term" value="F:ferrous iron binding"/>
    <property type="evidence" value="ECO:0007669"/>
    <property type="project" value="TreeGrafter"/>
</dbReference>
<dbReference type="GO" id="GO:0016226">
    <property type="term" value="P:iron-sulfur cluster assembly"/>
    <property type="evidence" value="ECO:0007669"/>
    <property type="project" value="UniProtKB-UniRule"/>
</dbReference>
<dbReference type="CDD" id="cd00503">
    <property type="entry name" value="Frataxin"/>
    <property type="match status" value="1"/>
</dbReference>
<dbReference type="Gene3D" id="3.30.920.10">
    <property type="entry name" value="Frataxin/CyaY"/>
    <property type="match status" value="1"/>
</dbReference>
<dbReference type="HAMAP" id="MF_00142">
    <property type="entry name" value="CyaY"/>
    <property type="match status" value="1"/>
</dbReference>
<dbReference type="InterPro" id="IPR047584">
    <property type="entry name" value="CyaY"/>
</dbReference>
<dbReference type="InterPro" id="IPR002908">
    <property type="entry name" value="Frataxin/CyaY"/>
</dbReference>
<dbReference type="InterPro" id="IPR036524">
    <property type="entry name" value="Frataxin/CyaY_sf"/>
</dbReference>
<dbReference type="InterPro" id="IPR020895">
    <property type="entry name" value="Frataxin_CS"/>
</dbReference>
<dbReference type="NCBIfam" id="TIGR03421">
    <property type="entry name" value="FeS_CyaY"/>
    <property type="match status" value="1"/>
</dbReference>
<dbReference type="PANTHER" id="PTHR16821">
    <property type="entry name" value="FRATAXIN"/>
    <property type="match status" value="1"/>
</dbReference>
<dbReference type="PANTHER" id="PTHR16821:SF2">
    <property type="entry name" value="FRATAXIN, MITOCHONDRIAL"/>
    <property type="match status" value="1"/>
</dbReference>
<dbReference type="Pfam" id="PF01491">
    <property type="entry name" value="Frataxin_Cyay"/>
    <property type="match status" value="1"/>
</dbReference>
<dbReference type="SMART" id="SM01219">
    <property type="entry name" value="Frataxin_Cyay"/>
    <property type="match status" value="1"/>
</dbReference>
<dbReference type="SUPFAM" id="SSF55387">
    <property type="entry name" value="Frataxin/Nqo15-like"/>
    <property type="match status" value="1"/>
</dbReference>
<dbReference type="PROSITE" id="PS01344">
    <property type="entry name" value="FRATAXIN_1"/>
    <property type="match status" value="1"/>
</dbReference>
<dbReference type="PROSITE" id="PS50810">
    <property type="entry name" value="FRATAXIN_2"/>
    <property type="match status" value="1"/>
</dbReference>
<keyword id="KW-0408">Iron</keyword>
<keyword id="KW-0479">Metal-binding</keyword>
<keyword id="KW-1185">Reference proteome</keyword>
<sequence length="105" mass="11741">MSDSEYLTRAEAALAAIERALDDTDADIELERSGNVLTLEFENRSKIIVNLQPPMSEIWIAAKAGGFHFRFVDGEWRDTRSGTEFFAALSEYATQQAGEPVHFEA</sequence>
<feature type="chain" id="PRO_1000010924" description="Iron-sulfur cluster assembly protein CyaY">
    <location>
        <begin position="1"/>
        <end position="105"/>
    </location>
</feature>
<proteinExistence type="inferred from homology"/>
<evidence type="ECO:0000255" key="1">
    <source>
        <dbReference type="HAMAP-Rule" id="MF_00142"/>
    </source>
</evidence>
<name>CYAY_PARXL</name>
<organism>
    <name type="scientific">Paraburkholderia xenovorans (strain LB400)</name>
    <dbReference type="NCBI Taxonomy" id="266265"/>
    <lineage>
        <taxon>Bacteria</taxon>
        <taxon>Pseudomonadati</taxon>
        <taxon>Pseudomonadota</taxon>
        <taxon>Betaproteobacteria</taxon>
        <taxon>Burkholderiales</taxon>
        <taxon>Burkholderiaceae</taxon>
        <taxon>Paraburkholderia</taxon>
    </lineage>
</organism>
<gene>
    <name evidence="1" type="primary">cyaY</name>
    <name type="ordered locus">Bxeno_A4042</name>
    <name type="ORF">Bxe_A0353</name>
</gene>
<accession>Q13TK9</accession>
<protein>
    <recommendedName>
        <fullName evidence="1">Iron-sulfur cluster assembly protein CyaY</fullName>
    </recommendedName>
</protein>
<reference key="1">
    <citation type="journal article" date="2006" name="Proc. Natl. Acad. Sci. U.S.A.">
        <title>Burkholderia xenovorans LB400 harbors a multi-replicon, 9.73-Mbp genome shaped for versatility.</title>
        <authorList>
            <person name="Chain P.S.G."/>
            <person name="Denef V.J."/>
            <person name="Konstantinidis K.T."/>
            <person name="Vergez L.M."/>
            <person name="Agullo L."/>
            <person name="Reyes V.L."/>
            <person name="Hauser L."/>
            <person name="Cordova M."/>
            <person name="Gomez L."/>
            <person name="Gonzalez M."/>
            <person name="Land M."/>
            <person name="Lao V."/>
            <person name="Larimer F."/>
            <person name="LiPuma J.J."/>
            <person name="Mahenthiralingam E."/>
            <person name="Malfatti S.A."/>
            <person name="Marx C.J."/>
            <person name="Parnell J.J."/>
            <person name="Ramette A."/>
            <person name="Richardson P."/>
            <person name="Seeger M."/>
            <person name="Smith D."/>
            <person name="Spilker T."/>
            <person name="Sul W.J."/>
            <person name="Tsoi T.V."/>
            <person name="Ulrich L.E."/>
            <person name="Zhulin I.B."/>
            <person name="Tiedje J.M."/>
        </authorList>
    </citation>
    <scope>NUCLEOTIDE SEQUENCE [LARGE SCALE GENOMIC DNA]</scope>
    <source>
        <strain>LB400</strain>
    </source>
</reference>